<sequence length="44" mass="4775">SEGTSCYIYHGVYGICKAKCAEDMKAMAGMGVCEGDLCCYKTPW</sequence>
<dbReference type="SMR" id="C0HK71"/>
<dbReference type="GO" id="GO:0005576">
    <property type="term" value="C:extracellular region"/>
    <property type="evidence" value="ECO:0007669"/>
    <property type="project" value="UniProtKB-SubCell"/>
</dbReference>
<dbReference type="GO" id="GO:0015066">
    <property type="term" value="F:alpha-amylase inhibitor activity"/>
    <property type="evidence" value="ECO:0007669"/>
    <property type="project" value="UniProtKB-KW"/>
</dbReference>
<keyword id="KW-0022">Alpha-amylase inhibitor</keyword>
<keyword id="KW-0903">Direct protein sequencing</keyword>
<keyword id="KW-1015">Disulfide bond</keyword>
<keyword id="KW-0582">Pharmaceutical</keyword>
<keyword id="KW-0964">Secreted</keyword>
<evidence type="ECO:0000250" key="1">
    <source>
        <dbReference type="UniProtKB" id="A0A0X1KGZ5"/>
    </source>
</evidence>
<evidence type="ECO:0000269" key="2">
    <source>
    </source>
</evidence>
<evidence type="ECO:0000269" key="3">
    <source>
    </source>
</evidence>
<evidence type="ECO:0000303" key="4">
    <source>
    </source>
</evidence>
<evidence type="ECO:0000305" key="5"/>
<evidence type="ECO:0000305" key="6">
    <source>
    </source>
</evidence>
<evidence type="ECO:0000305" key="7">
    <source>
    </source>
</evidence>
<reference key="1">
    <citation type="journal article" date="2018" name="J. Proteomics">
        <title>Peptide fingerprinting of the sea anemone Heteractis magnifica mucus revealed neurotoxins, Kunitz-type proteinase inhibitors and a new beta-defensin alpha-amylase inhibitor.</title>
        <authorList>
            <person name="Sintsova O."/>
            <person name="Gladkikh I."/>
            <person name="Chausova V."/>
            <person name="Monastyrnaya M."/>
            <person name="Anastyuk S."/>
            <person name="Chernikov O."/>
            <person name="Yurchenko E."/>
            <person name="Aminin D."/>
            <person name="Isaeva M."/>
            <person name="Leychenko E."/>
            <person name="Kozlovskaya E."/>
        </authorList>
    </citation>
    <scope>PROTEIN SEQUENCE</scope>
    <scope>FUNCTION</scope>
    <scope>MASS SPECTROMETRY</scope>
</reference>
<reference key="2">
    <citation type="journal article" date="2019" name="Mar. Drugs">
        <title>Magnificamide, a beta-defensin-like peptide from the mucus of the sea anemone Heteractis magnifica, is a strong inhibitor of mammalian alpha-amylases.</title>
        <authorList>
            <person name="Sintsova O."/>
            <person name="Gladkikh I."/>
            <person name="Kalinovskii A."/>
            <person name="Zelepuga E."/>
            <person name="Monastyrnaya M."/>
            <person name="Kim N."/>
            <person name="Shevchenko L."/>
            <person name="Peigneur S."/>
            <person name="Tytgat J."/>
            <person name="Kozlovskaya E."/>
            <person name="Leychenko E."/>
        </authorList>
    </citation>
    <scope>FUNCTION</scope>
    <scope>3D-STRUCTURE MODELING</scope>
    <scope>RECOMBINANT EXPRESSION</scope>
</reference>
<comment type="function">
    <text evidence="2 3">Mammalian alpha-amylase (AMY2A) inhibitor (PubMed:29191747, PubMed:31546678). The recombinant peptide inhibits porcine pancreatic (Ki=0.17 nM) and human saliva alpha-amylases (Ki=7.7 nM) (PubMed:31546678). It does not show antimicrobial (tested on fungi and bacteria) or channel modulating activities (tested on 18 voltage-gated sodium and potassium channles) (PubMed:31546678).</text>
</comment>
<comment type="subcellular location">
    <subcellularLocation>
        <location evidence="6">Secreted</location>
    </subcellularLocation>
</comment>
<comment type="domain">
    <text evidence="5">Is structurally homologous to beta-defensins.</text>
</comment>
<comment type="mass spectrometry" mass="4770.0" method="MALDI" evidence="2"/>
<comment type="pharmaceutical">
    <text evidence="7">Potential drug candidate for the treatment of the type 2 diabetes mellitus.</text>
</comment>
<comment type="miscellaneous">
    <text evidence="5">A synonymy between H.magnifica and R.crispa is controversial.</text>
</comment>
<comment type="similarity">
    <text evidence="5">Belongs to the sea anemone alpha-amylase inhibitor family.</text>
</comment>
<accession>C0HK71</accession>
<proteinExistence type="evidence at protein level"/>
<name>IAA1_HETMG</name>
<organism>
    <name type="scientific">Heteractis magnifica</name>
    <name type="common">Magnificent sea anemone</name>
    <name type="synonym">Radianthus magnifica</name>
    <dbReference type="NCBI Taxonomy" id="38281"/>
    <lineage>
        <taxon>Eukaryota</taxon>
        <taxon>Metazoa</taxon>
        <taxon>Cnidaria</taxon>
        <taxon>Anthozoa</taxon>
        <taxon>Hexacorallia</taxon>
        <taxon>Actiniaria</taxon>
        <taxon>Stichodactylidae</taxon>
        <taxon>Heteractis</taxon>
    </lineage>
</organism>
<protein>
    <recommendedName>
        <fullName evidence="4">Alpha-amylase inhibitor magnificamide</fullName>
    </recommendedName>
</protein>
<feature type="peptide" id="PRO_0000443115" description="Alpha-amylase inhibitor magnificamide" evidence="2">
    <location>
        <begin position="1"/>
        <end position="44"/>
    </location>
</feature>
<feature type="region of interest" description="Inhibitory motif" evidence="1">
    <location>
        <begin position="7"/>
        <end position="10"/>
    </location>
</feature>
<feature type="disulfide bond" evidence="1">
    <location>
        <begin position="6"/>
        <end position="38"/>
    </location>
</feature>
<feature type="disulfide bond" evidence="1">
    <location>
        <begin position="16"/>
        <end position="33"/>
    </location>
</feature>
<feature type="disulfide bond" evidence="1">
    <location>
        <begin position="20"/>
        <end position="39"/>
    </location>
</feature>